<proteinExistence type="inferred from homology"/>
<protein>
    <recommendedName>
        <fullName evidence="1">tRNA-2-methylthio-N(6)-dimethylallyladenosine synthase</fullName>
        <ecNumber evidence="1">2.8.4.3</ecNumber>
    </recommendedName>
    <alternativeName>
        <fullName evidence="1">(Dimethylallyl)adenosine tRNA methylthiotransferase MiaB</fullName>
    </alternativeName>
    <alternativeName>
        <fullName evidence="1">tRNA-i(6)A37 methylthiotransferase</fullName>
    </alternativeName>
</protein>
<sequence length="442" mass="49566">MKKVFIRTFGCQMNEYDSDKMLAVLAEEHGGIEQVTQADEADIILFNTCSVREKAQEKVFSDLGRVRPLKEKNPGLIIGVAGCVASQEGENIIKRAPYVDVVFGPQTLHRLPKMIVDKETSGLSQVDISFPEIEKFDHLPPARVEGGAAFVSIMEGCSKYCSFCVVPYTRGEEFSRPLNDVLTEIANLAQQGVKEINLLGQNVNAYRGEMDDGEICDFATLLRIVHEIPGIERMRFTTSHPREFTDSIIECYRDLPKLVSHLHLPIQSGSDRVLSAMKRGYTALEYKSIIRKLRAIRPDLCLSSDFIVGFPGETEREFEQTLKLVKDIAFDLSFVFIYSPRPGTPAANLPDDTPHEEKVRRLEALNEVIEAETARINQTMVGTVQRCLVEGISKKDPDQLQARTANNRVVNFTGTPDMINQMIDLEITEAYTFSLRGKVVEA</sequence>
<organism>
    <name type="scientific">Neisseria meningitidis serogroup B (strain ATCC BAA-335 / MC58)</name>
    <dbReference type="NCBI Taxonomy" id="122586"/>
    <lineage>
        <taxon>Bacteria</taxon>
        <taxon>Pseudomonadati</taxon>
        <taxon>Pseudomonadota</taxon>
        <taxon>Betaproteobacteria</taxon>
        <taxon>Neisseriales</taxon>
        <taxon>Neisseriaceae</taxon>
        <taxon>Neisseria</taxon>
    </lineage>
</organism>
<feature type="chain" id="PRO_0000374403" description="tRNA-2-methylthio-N(6)-dimethylallyladenosine synthase">
    <location>
        <begin position="1"/>
        <end position="442"/>
    </location>
</feature>
<feature type="domain" description="MTTase N-terminal" evidence="1">
    <location>
        <begin position="2"/>
        <end position="120"/>
    </location>
</feature>
<feature type="domain" description="Radical SAM core" evidence="2">
    <location>
        <begin position="143"/>
        <end position="375"/>
    </location>
</feature>
<feature type="domain" description="TRAM" evidence="1">
    <location>
        <begin position="378"/>
        <end position="441"/>
    </location>
</feature>
<feature type="binding site" evidence="1">
    <location>
        <position position="11"/>
    </location>
    <ligand>
        <name>[4Fe-4S] cluster</name>
        <dbReference type="ChEBI" id="CHEBI:49883"/>
        <label>1</label>
    </ligand>
</feature>
<feature type="binding site" evidence="1">
    <location>
        <position position="49"/>
    </location>
    <ligand>
        <name>[4Fe-4S] cluster</name>
        <dbReference type="ChEBI" id="CHEBI:49883"/>
        <label>1</label>
    </ligand>
</feature>
<feature type="binding site" evidence="1">
    <location>
        <position position="83"/>
    </location>
    <ligand>
        <name>[4Fe-4S] cluster</name>
        <dbReference type="ChEBI" id="CHEBI:49883"/>
        <label>1</label>
    </ligand>
</feature>
<feature type="binding site" evidence="1">
    <location>
        <position position="157"/>
    </location>
    <ligand>
        <name>[4Fe-4S] cluster</name>
        <dbReference type="ChEBI" id="CHEBI:49883"/>
        <label>2</label>
        <note>4Fe-4S-S-AdoMet</note>
    </ligand>
</feature>
<feature type="binding site" evidence="1">
    <location>
        <position position="161"/>
    </location>
    <ligand>
        <name>[4Fe-4S] cluster</name>
        <dbReference type="ChEBI" id="CHEBI:49883"/>
        <label>2</label>
        <note>4Fe-4S-S-AdoMet</note>
    </ligand>
</feature>
<feature type="binding site" evidence="1">
    <location>
        <position position="164"/>
    </location>
    <ligand>
        <name>[4Fe-4S] cluster</name>
        <dbReference type="ChEBI" id="CHEBI:49883"/>
        <label>2</label>
        <note>4Fe-4S-S-AdoMet</note>
    </ligand>
</feature>
<accession>Q9JXV8</accession>
<name>MIAB_NEIMB</name>
<gene>
    <name evidence="1" type="primary">miaB</name>
    <name type="ordered locus">NMB1866</name>
</gene>
<comment type="function">
    <text evidence="1">Catalyzes the methylthiolation of N6-(dimethylallyl)adenosine (i(6)A), leading to the formation of 2-methylthio-N6-(dimethylallyl)adenosine (ms(2)i(6)A) at position 37 in tRNAs that read codons beginning with uridine.</text>
</comment>
<comment type="catalytic activity">
    <reaction evidence="1">
        <text>N(6)-dimethylallyladenosine(37) in tRNA + (sulfur carrier)-SH + AH2 + 2 S-adenosyl-L-methionine = 2-methylsulfanyl-N(6)-dimethylallyladenosine(37) in tRNA + (sulfur carrier)-H + 5'-deoxyadenosine + L-methionine + A + S-adenosyl-L-homocysteine + 2 H(+)</text>
        <dbReference type="Rhea" id="RHEA:37067"/>
        <dbReference type="Rhea" id="RHEA-COMP:10375"/>
        <dbReference type="Rhea" id="RHEA-COMP:10376"/>
        <dbReference type="Rhea" id="RHEA-COMP:14737"/>
        <dbReference type="Rhea" id="RHEA-COMP:14739"/>
        <dbReference type="ChEBI" id="CHEBI:13193"/>
        <dbReference type="ChEBI" id="CHEBI:15378"/>
        <dbReference type="ChEBI" id="CHEBI:17319"/>
        <dbReference type="ChEBI" id="CHEBI:17499"/>
        <dbReference type="ChEBI" id="CHEBI:29917"/>
        <dbReference type="ChEBI" id="CHEBI:57844"/>
        <dbReference type="ChEBI" id="CHEBI:57856"/>
        <dbReference type="ChEBI" id="CHEBI:59789"/>
        <dbReference type="ChEBI" id="CHEBI:64428"/>
        <dbReference type="ChEBI" id="CHEBI:74415"/>
        <dbReference type="ChEBI" id="CHEBI:74417"/>
        <dbReference type="EC" id="2.8.4.3"/>
    </reaction>
</comment>
<comment type="cofactor">
    <cofactor evidence="1">
        <name>[4Fe-4S] cluster</name>
        <dbReference type="ChEBI" id="CHEBI:49883"/>
    </cofactor>
    <text evidence="1">Binds 2 [4Fe-4S] clusters. One cluster is coordinated with 3 cysteines and an exchangeable S-adenosyl-L-methionine.</text>
</comment>
<comment type="subunit">
    <text evidence="1">Monomer.</text>
</comment>
<comment type="subcellular location">
    <subcellularLocation>
        <location evidence="1">Cytoplasm</location>
    </subcellularLocation>
</comment>
<comment type="similarity">
    <text evidence="1">Belongs to the methylthiotransferase family. MiaB subfamily.</text>
</comment>
<evidence type="ECO:0000255" key="1">
    <source>
        <dbReference type="HAMAP-Rule" id="MF_01864"/>
    </source>
</evidence>
<evidence type="ECO:0000255" key="2">
    <source>
        <dbReference type="PROSITE-ProRule" id="PRU01266"/>
    </source>
</evidence>
<reference key="1">
    <citation type="journal article" date="2000" name="Science">
        <title>Complete genome sequence of Neisseria meningitidis serogroup B strain MC58.</title>
        <authorList>
            <person name="Tettelin H."/>
            <person name="Saunders N.J."/>
            <person name="Heidelberg J.F."/>
            <person name="Jeffries A.C."/>
            <person name="Nelson K.E."/>
            <person name="Eisen J.A."/>
            <person name="Ketchum K.A."/>
            <person name="Hood D.W."/>
            <person name="Peden J.F."/>
            <person name="Dodson R.J."/>
            <person name="Nelson W.C."/>
            <person name="Gwinn M.L."/>
            <person name="DeBoy R.T."/>
            <person name="Peterson J.D."/>
            <person name="Hickey E.K."/>
            <person name="Haft D.H."/>
            <person name="Salzberg S.L."/>
            <person name="White O."/>
            <person name="Fleischmann R.D."/>
            <person name="Dougherty B.A."/>
            <person name="Mason T.M."/>
            <person name="Ciecko A."/>
            <person name="Parksey D.S."/>
            <person name="Blair E."/>
            <person name="Cittone H."/>
            <person name="Clark E.B."/>
            <person name="Cotton M.D."/>
            <person name="Utterback T.R."/>
            <person name="Khouri H.M."/>
            <person name="Qin H."/>
            <person name="Vamathevan J.J."/>
            <person name="Gill J."/>
            <person name="Scarlato V."/>
            <person name="Masignani V."/>
            <person name="Pizza M."/>
            <person name="Grandi G."/>
            <person name="Sun L."/>
            <person name="Smith H.O."/>
            <person name="Fraser C.M."/>
            <person name="Moxon E.R."/>
            <person name="Rappuoli R."/>
            <person name="Venter J.C."/>
        </authorList>
    </citation>
    <scope>NUCLEOTIDE SEQUENCE [LARGE SCALE GENOMIC DNA]</scope>
    <source>
        <strain>ATCC BAA-335 / MC58</strain>
    </source>
</reference>
<dbReference type="EC" id="2.8.4.3" evidence="1"/>
<dbReference type="EMBL" id="AE002098">
    <property type="protein sequence ID" value="AAF42200.1"/>
    <property type="molecule type" value="Genomic_DNA"/>
</dbReference>
<dbReference type="PIR" id="C81034">
    <property type="entry name" value="C81034"/>
</dbReference>
<dbReference type="RefSeq" id="NP_274862.1">
    <property type="nucleotide sequence ID" value="NC_003112.2"/>
</dbReference>
<dbReference type="RefSeq" id="WP_002214640.1">
    <property type="nucleotide sequence ID" value="NC_003112.2"/>
</dbReference>
<dbReference type="SMR" id="Q9JXV8"/>
<dbReference type="FunCoup" id="Q9JXV8">
    <property type="interactions" value="490"/>
</dbReference>
<dbReference type="STRING" id="122586.NMB1866"/>
<dbReference type="PaxDb" id="122586-NMB1866"/>
<dbReference type="KEGG" id="nme:NMB1866"/>
<dbReference type="PATRIC" id="fig|122586.8.peg.2386"/>
<dbReference type="HOGENOM" id="CLU_018697_2_0_4"/>
<dbReference type="InParanoid" id="Q9JXV8"/>
<dbReference type="OrthoDB" id="9805215at2"/>
<dbReference type="Proteomes" id="UP000000425">
    <property type="component" value="Chromosome"/>
</dbReference>
<dbReference type="GO" id="GO:0005829">
    <property type="term" value="C:cytosol"/>
    <property type="evidence" value="ECO:0000318"/>
    <property type="project" value="GO_Central"/>
</dbReference>
<dbReference type="GO" id="GO:0051539">
    <property type="term" value="F:4 iron, 4 sulfur cluster binding"/>
    <property type="evidence" value="ECO:0000318"/>
    <property type="project" value="GO_Central"/>
</dbReference>
<dbReference type="GO" id="GO:0046872">
    <property type="term" value="F:metal ion binding"/>
    <property type="evidence" value="ECO:0007669"/>
    <property type="project" value="UniProtKB-KW"/>
</dbReference>
<dbReference type="GO" id="GO:0035597">
    <property type="term" value="F:N6-isopentenyladenosine methylthiotransferase activity"/>
    <property type="evidence" value="ECO:0000318"/>
    <property type="project" value="GO_Central"/>
</dbReference>
<dbReference type="GO" id="GO:0035600">
    <property type="term" value="P:tRNA methylthiolation"/>
    <property type="evidence" value="ECO:0000318"/>
    <property type="project" value="GO_Central"/>
</dbReference>
<dbReference type="CDD" id="cd01335">
    <property type="entry name" value="Radical_SAM"/>
    <property type="match status" value="1"/>
</dbReference>
<dbReference type="FunFam" id="3.40.50.12160:FF:000001">
    <property type="entry name" value="tRNA-2-methylthio-N(6)-dimethylallyladenosine synthase"/>
    <property type="match status" value="1"/>
</dbReference>
<dbReference type="FunFam" id="3.80.30.20:FF:000001">
    <property type="entry name" value="tRNA-2-methylthio-N(6)-dimethylallyladenosine synthase 2"/>
    <property type="match status" value="1"/>
</dbReference>
<dbReference type="Gene3D" id="3.40.50.12160">
    <property type="entry name" value="Methylthiotransferase, N-terminal domain"/>
    <property type="match status" value="1"/>
</dbReference>
<dbReference type="Gene3D" id="3.80.30.20">
    <property type="entry name" value="tm_1862 like domain"/>
    <property type="match status" value="1"/>
</dbReference>
<dbReference type="HAMAP" id="MF_01864">
    <property type="entry name" value="tRNA_metthiotr_MiaB"/>
    <property type="match status" value="1"/>
</dbReference>
<dbReference type="InterPro" id="IPR006638">
    <property type="entry name" value="Elp3/MiaA/NifB-like_rSAM"/>
</dbReference>
<dbReference type="InterPro" id="IPR005839">
    <property type="entry name" value="Methylthiotransferase"/>
</dbReference>
<dbReference type="InterPro" id="IPR020612">
    <property type="entry name" value="Methylthiotransferase_CS"/>
</dbReference>
<dbReference type="InterPro" id="IPR013848">
    <property type="entry name" value="Methylthiotransferase_N"/>
</dbReference>
<dbReference type="InterPro" id="IPR038135">
    <property type="entry name" value="Methylthiotransferase_N_sf"/>
</dbReference>
<dbReference type="InterPro" id="IPR006463">
    <property type="entry name" value="MiaB_methiolase"/>
</dbReference>
<dbReference type="InterPro" id="IPR007197">
    <property type="entry name" value="rSAM"/>
</dbReference>
<dbReference type="InterPro" id="IPR023404">
    <property type="entry name" value="rSAM_horseshoe"/>
</dbReference>
<dbReference type="InterPro" id="IPR002792">
    <property type="entry name" value="TRAM_dom"/>
</dbReference>
<dbReference type="NCBIfam" id="TIGR01574">
    <property type="entry name" value="miaB-methiolase"/>
    <property type="match status" value="1"/>
</dbReference>
<dbReference type="NCBIfam" id="TIGR00089">
    <property type="entry name" value="MiaB/RimO family radical SAM methylthiotransferase"/>
    <property type="match status" value="1"/>
</dbReference>
<dbReference type="PANTHER" id="PTHR43020">
    <property type="entry name" value="CDK5 REGULATORY SUBUNIT-ASSOCIATED PROTEIN 1"/>
    <property type="match status" value="1"/>
</dbReference>
<dbReference type="PANTHER" id="PTHR43020:SF2">
    <property type="entry name" value="MITOCHONDRIAL TRNA METHYLTHIOTRANSFERASE CDK5RAP1"/>
    <property type="match status" value="1"/>
</dbReference>
<dbReference type="Pfam" id="PF04055">
    <property type="entry name" value="Radical_SAM"/>
    <property type="match status" value="1"/>
</dbReference>
<dbReference type="Pfam" id="PF01938">
    <property type="entry name" value="TRAM"/>
    <property type="match status" value="1"/>
</dbReference>
<dbReference type="Pfam" id="PF00919">
    <property type="entry name" value="UPF0004"/>
    <property type="match status" value="1"/>
</dbReference>
<dbReference type="SFLD" id="SFLDF00273">
    <property type="entry name" value="(dimethylallyl)adenosine_tRNA"/>
    <property type="match status" value="1"/>
</dbReference>
<dbReference type="SFLD" id="SFLDG01082">
    <property type="entry name" value="B12-binding_domain_containing"/>
    <property type="match status" value="1"/>
</dbReference>
<dbReference type="SFLD" id="SFLDS00029">
    <property type="entry name" value="Radical_SAM"/>
    <property type="match status" value="1"/>
</dbReference>
<dbReference type="SMART" id="SM00729">
    <property type="entry name" value="Elp3"/>
    <property type="match status" value="1"/>
</dbReference>
<dbReference type="SUPFAM" id="SSF102114">
    <property type="entry name" value="Radical SAM enzymes"/>
    <property type="match status" value="1"/>
</dbReference>
<dbReference type="PROSITE" id="PS51449">
    <property type="entry name" value="MTTASE_N"/>
    <property type="match status" value="1"/>
</dbReference>
<dbReference type="PROSITE" id="PS01278">
    <property type="entry name" value="MTTASE_RADICAL"/>
    <property type="match status" value="1"/>
</dbReference>
<dbReference type="PROSITE" id="PS51918">
    <property type="entry name" value="RADICAL_SAM"/>
    <property type="match status" value="1"/>
</dbReference>
<dbReference type="PROSITE" id="PS50926">
    <property type="entry name" value="TRAM"/>
    <property type="match status" value="1"/>
</dbReference>
<keyword id="KW-0004">4Fe-4S</keyword>
<keyword id="KW-0963">Cytoplasm</keyword>
<keyword id="KW-0408">Iron</keyword>
<keyword id="KW-0411">Iron-sulfur</keyword>
<keyword id="KW-0479">Metal-binding</keyword>
<keyword id="KW-1185">Reference proteome</keyword>
<keyword id="KW-0949">S-adenosyl-L-methionine</keyword>
<keyword id="KW-0808">Transferase</keyword>
<keyword id="KW-0819">tRNA processing</keyword>